<sequence>MDFKQIKSNVEKVKFLRKDFPILNKKFDNKYIIYFDNAATSQKPKNVIYSNVEYYENYNANVHRSGHKFAIQSSIKIEKTRELVKNFINAESAKNIIFTSGTTDGINTIASSFFYSKYFKKKDEIILTTLEHNSNLLPWVNLANLANLKIKLAKFNEMGIITPEEIEKLITEKTKLISISGINNTLGTINDLESIGKIAKKYNICLFVDAAQMAPHIKIDVKKIGCDFLVFSGHKMLAPTGIGILYISNNMAEKLHSSKLGGNTVEEIFIENEKIKFKASDSPNKFESGTPNIAGIIGLEEAIKYIDNISMDFILEHDKQLIEYGVKKLQELDEVEFILNTNLKRNSIISFTVKNIHSHDIETYLDTMGIATRAGRTCSYVAFFPENLNKDHLLRISFYFYNTQEEIDNFILGLKKVIKELS</sequence>
<dbReference type="EC" id="2.8.1.7"/>
<dbReference type="EMBL" id="AE000783">
    <property type="protein sequence ID" value="AAC66472.1"/>
    <property type="molecule type" value="Genomic_DNA"/>
</dbReference>
<dbReference type="PIR" id="D70110">
    <property type="entry name" value="D70110"/>
</dbReference>
<dbReference type="RefSeq" id="NP_212218.1">
    <property type="nucleotide sequence ID" value="NC_001318.1"/>
</dbReference>
<dbReference type="RefSeq" id="WP_002656576.1">
    <property type="nucleotide sequence ID" value="NC_001318.1"/>
</dbReference>
<dbReference type="SMR" id="O51111"/>
<dbReference type="STRING" id="224326.BB_0084"/>
<dbReference type="PaxDb" id="224326-BB_0084"/>
<dbReference type="EnsemblBacteria" id="AAC66472">
    <property type="protein sequence ID" value="AAC66472"/>
    <property type="gene ID" value="BB_0084"/>
</dbReference>
<dbReference type="KEGG" id="bbu:BB_0084"/>
<dbReference type="PATRIC" id="fig|224326.49.peg.482"/>
<dbReference type="HOGENOM" id="CLU_003433_2_5_12"/>
<dbReference type="OrthoDB" id="9804366at2"/>
<dbReference type="Proteomes" id="UP000001807">
    <property type="component" value="Chromosome"/>
</dbReference>
<dbReference type="GO" id="GO:0005829">
    <property type="term" value="C:cytosol"/>
    <property type="evidence" value="ECO:0000314"/>
    <property type="project" value="CAFA"/>
</dbReference>
<dbReference type="GO" id="GO:0031071">
    <property type="term" value="F:cysteine desulfurase activity"/>
    <property type="evidence" value="ECO:0007669"/>
    <property type="project" value="UniProtKB-EC"/>
</dbReference>
<dbReference type="GO" id="GO:0030170">
    <property type="term" value="F:pyridoxal phosphate binding"/>
    <property type="evidence" value="ECO:0007669"/>
    <property type="project" value="InterPro"/>
</dbReference>
<dbReference type="GO" id="GO:0006534">
    <property type="term" value="P:cysteine metabolic process"/>
    <property type="evidence" value="ECO:0007669"/>
    <property type="project" value="InterPro"/>
</dbReference>
<dbReference type="CDD" id="cd06453">
    <property type="entry name" value="SufS_like"/>
    <property type="match status" value="1"/>
</dbReference>
<dbReference type="Gene3D" id="3.90.1150.10">
    <property type="entry name" value="Aspartate Aminotransferase, domain 1"/>
    <property type="match status" value="1"/>
</dbReference>
<dbReference type="Gene3D" id="3.40.640.10">
    <property type="entry name" value="Type I PLP-dependent aspartate aminotransferase-like (Major domain)"/>
    <property type="match status" value="1"/>
</dbReference>
<dbReference type="InterPro" id="IPR000192">
    <property type="entry name" value="Aminotrans_V_dom"/>
</dbReference>
<dbReference type="InterPro" id="IPR020578">
    <property type="entry name" value="Aminotrans_V_PyrdxlP_BS"/>
</dbReference>
<dbReference type="InterPro" id="IPR010970">
    <property type="entry name" value="Cys_dSase_SufS"/>
</dbReference>
<dbReference type="InterPro" id="IPR016454">
    <property type="entry name" value="Cysteine_dSase"/>
</dbReference>
<dbReference type="InterPro" id="IPR015424">
    <property type="entry name" value="PyrdxlP-dep_Trfase"/>
</dbReference>
<dbReference type="InterPro" id="IPR015421">
    <property type="entry name" value="PyrdxlP-dep_Trfase_major"/>
</dbReference>
<dbReference type="InterPro" id="IPR015422">
    <property type="entry name" value="PyrdxlP-dep_Trfase_small"/>
</dbReference>
<dbReference type="PANTHER" id="PTHR43586">
    <property type="entry name" value="CYSTEINE DESULFURASE"/>
    <property type="match status" value="1"/>
</dbReference>
<dbReference type="PANTHER" id="PTHR43586:SF8">
    <property type="entry name" value="CYSTEINE DESULFURASE 1, CHLOROPLASTIC"/>
    <property type="match status" value="1"/>
</dbReference>
<dbReference type="Pfam" id="PF00266">
    <property type="entry name" value="Aminotran_5"/>
    <property type="match status" value="1"/>
</dbReference>
<dbReference type="PIRSF" id="PIRSF005572">
    <property type="entry name" value="NifS"/>
    <property type="match status" value="1"/>
</dbReference>
<dbReference type="SUPFAM" id="SSF53383">
    <property type="entry name" value="PLP-dependent transferases"/>
    <property type="match status" value="1"/>
</dbReference>
<dbReference type="PROSITE" id="PS00595">
    <property type="entry name" value="AA_TRANSFER_CLASS_5"/>
    <property type="match status" value="1"/>
</dbReference>
<reference key="1">
    <citation type="journal article" date="1997" name="Nature">
        <title>Genomic sequence of a Lyme disease spirochaete, Borrelia burgdorferi.</title>
        <authorList>
            <person name="Fraser C.M."/>
            <person name="Casjens S."/>
            <person name="Huang W.M."/>
            <person name="Sutton G.G."/>
            <person name="Clayton R.A."/>
            <person name="Lathigra R."/>
            <person name="White O."/>
            <person name="Ketchum K.A."/>
            <person name="Dodson R.J."/>
            <person name="Hickey E.K."/>
            <person name="Gwinn M.L."/>
            <person name="Dougherty B.A."/>
            <person name="Tomb J.-F."/>
            <person name="Fleischmann R.D."/>
            <person name="Richardson D.L."/>
            <person name="Peterson J.D."/>
            <person name="Kerlavage A.R."/>
            <person name="Quackenbush J."/>
            <person name="Salzberg S.L."/>
            <person name="Hanson M."/>
            <person name="van Vugt R."/>
            <person name="Palmer N."/>
            <person name="Adams M.D."/>
            <person name="Gocayne J.D."/>
            <person name="Weidman J.F."/>
            <person name="Utterback T.R."/>
            <person name="Watthey L."/>
            <person name="McDonald L.A."/>
            <person name="Artiach P."/>
            <person name="Bowman C."/>
            <person name="Garland S.A."/>
            <person name="Fujii C."/>
            <person name="Cotton M.D."/>
            <person name="Horst K."/>
            <person name="Roberts K.M."/>
            <person name="Hatch B."/>
            <person name="Smith H.O."/>
            <person name="Venter J.C."/>
        </authorList>
    </citation>
    <scope>NUCLEOTIDE SEQUENCE [LARGE SCALE GENOMIC DNA]</scope>
    <source>
        <strain>ATCC 35210 / DSM 4680 / CIP 102532 / B31</strain>
    </source>
</reference>
<evidence type="ECO:0000250" key="1"/>
<evidence type="ECO:0000305" key="2"/>
<organism>
    <name type="scientific">Borreliella burgdorferi (strain ATCC 35210 / DSM 4680 / CIP 102532 / B31)</name>
    <name type="common">Borrelia burgdorferi</name>
    <dbReference type="NCBI Taxonomy" id="224326"/>
    <lineage>
        <taxon>Bacteria</taxon>
        <taxon>Pseudomonadati</taxon>
        <taxon>Spirochaetota</taxon>
        <taxon>Spirochaetia</taxon>
        <taxon>Spirochaetales</taxon>
        <taxon>Borreliaceae</taxon>
        <taxon>Borreliella</taxon>
    </lineage>
</organism>
<name>CSD_BORBU</name>
<keyword id="KW-0663">Pyridoxal phosphate</keyword>
<keyword id="KW-1185">Reference proteome</keyword>
<keyword id="KW-0808">Transferase</keyword>
<gene>
    <name type="primary">csd</name>
    <name type="ordered locus">BB_0084</name>
</gene>
<protein>
    <recommendedName>
        <fullName>Probable cysteine desulfurase</fullName>
        <ecNumber>2.8.1.7</ecNumber>
    </recommendedName>
</protein>
<feature type="chain" id="PRO_0000150294" description="Probable cysteine desulfurase">
    <location>
        <begin position="1"/>
        <end position="422"/>
    </location>
</feature>
<feature type="modified residue" description="N6-(pyridoxal phosphate)lysine" evidence="1">
    <location>
        <position position="235"/>
    </location>
</feature>
<accession>O51111</accession>
<comment type="function">
    <text evidence="1">Catalyzes the removal of elemental sulfur and selenium atoms from L-cysteine, L-cystine, L-selenocysteine, and L-selenocystine to produce L-alanine.</text>
</comment>
<comment type="catalytic activity">
    <reaction>
        <text>(sulfur carrier)-H + L-cysteine = (sulfur carrier)-SH + L-alanine</text>
        <dbReference type="Rhea" id="RHEA:43892"/>
        <dbReference type="Rhea" id="RHEA-COMP:14737"/>
        <dbReference type="Rhea" id="RHEA-COMP:14739"/>
        <dbReference type="ChEBI" id="CHEBI:29917"/>
        <dbReference type="ChEBI" id="CHEBI:35235"/>
        <dbReference type="ChEBI" id="CHEBI:57972"/>
        <dbReference type="ChEBI" id="CHEBI:64428"/>
        <dbReference type="EC" id="2.8.1.7"/>
    </reaction>
</comment>
<comment type="cofactor">
    <cofactor evidence="1">
        <name>pyridoxal 5'-phosphate</name>
        <dbReference type="ChEBI" id="CHEBI:597326"/>
    </cofactor>
</comment>
<comment type="similarity">
    <text evidence="2">Belongs to the class-V pyridoxal-phosphate-dependent aminotransferase family. Csd subfamily.</text>
</comment>
<proteinExistence type="inferred from homology"/>